<name>MT2_SCYSE</name>
<protein>
    <recommendedName>
        <fullName>Metallothionein-2</fullName>
        <shortName>MT-2</shortName>
    </recommendedName>
    <alternativeName>
        <fullName>Metallothionein-II</fullName>
        <shortName>MT-II</shortName>
    </alternativeName>
</protein>
<reference key="1">
    <citation type="journal article" date="1982" name="J. Biol. Chem.">
        <title>Crab metallothionein. Primary structures of metallothioneins 1 and 2.</title>
        <authorList>
            <person name="Lerch K."/>
            <person name="Ammer D."/>
            <person name="Olafson R.W."/>
        </authorList>
    </citation>
    <scope>PROTEIN SEQUENCE</scope>
</reference>
<proteinExistence type="evidence at protein level"/>
<feature type="chain" id="PRO_0000197341" description="Metallothionein-2">
    <location>
        <begin position="1"/>
        <end position="57"/>
    </location>
</feature>
<feature type="region of interest" description="Beta">
    <location>
        <begin position="1"/>
        <end position="28"/>
    </location>
</feature>
<feature type="region of interest" description="Alpha">
    <location>
        <begin position="29"/>
        <end position="57"/>
    </location>
</feature>
<feature type="binding site" evidence="1">
    <location>
        <position position="4"/>
    </location>
    <ligand>
        <name>a divalent metal cation</name>
        <dbReference type="ChEBI" id="CHEBI:60240"/>
        <label>1</label>
        <note>in cluster B</note>
    </ligand>
</feature>
<feature type="binding site" evidence="1">
    <location>
        <position position="5"/>
    </location>
    <ligand>
        <name>a divalent metal cation</name>
        <dbReference type="ChEBI" id="CHEBI:60240"/>
        <label>1</label>
        <note>in cluster B</note>
    </ligand>
</feature>
<feature type="binding site" evidence="1">
    <location>
        <position position="5"/>
    </location>
    <ligand>
        <name>a divalent metal cation</name>
        <dbReference type="ChEBI" id="CHEBI:60240"/>
        <label>2</label>
        <note>in cluster B</note>
    </ligand>
</feature>
<feature type="binding site" evidence="1">
    <location>
        <position position="9"/>
    </location>
    <ligand>
        <name>a divalent metal cation</name>
        <dbReference type="ChEBI" id="CHEBI:60240"/>
        <label>2</label>
        <note>in cluster B</note>
    </ligand>
</feature>
<feature type="binding site" evidence="1">
    <location>
        <position position="11"/>
    </location>
    <ligand>
        <name>a divalent metal cation</name>
        <dbReference type="ChEBI" id="CHEBI:60240"/>
        <label>3</label>
        <note>in cluster B</note>
    </ligand>
</feature>
<feature type="binding site" evidence="1">
    <location>
        <position position="16"/>
    </location>
    <ligand>
        <name>a divalent metal cation</name>
        <dbReference type="ChEBI" id="CHEBI:60240"/>
        <label>1</label>
        <note>in cluster B</note>
    </ligand>
</feature>
<feature type="binding site" evidence="1">
    <location>
        <position position="16"/>
    </location>
    <ligand>
        <name>a divalent metal cation</name>
        <dbReference type="ChEBI" id="CHEBI:60240"/>
        <label>3</label>
        <note>in cluster B</note>
    </ligand>
</feature>
<feature type="binding site" evidence="1">
    <location>
        <position position="20"/>
    </location>
    <ligand>
        <name>a divalent metal cation</name>
        <dbReference type="ChEBI" id="CHEBI:60240"/>
        <label>1</label>
        <note>in cluster B</note>
    </ligand>
</feature>
<feature type="binding site" evidence="1">
    <location>
        <position position="22"/>
    </location>
    <ligand>
        <name>a divalent metal cation</name>
        <dbReference type="ChEBI" id="CHEBI:60240"/>
        <label>2</label>
        <note>in cluster B</note>
    </ligand>
</feature>
<feature type="binding site" evidence="1">
    <location>
        <position position="25"/>
    </location>
    <ligand>
        <name>a divalent metal cation</name>
        <dbReference type="ChEBI" id="CHEBI:60240"/>
        <label>2</label>
        <note>in cluster B</note>
    </ligand>
</feature>
<feature type="binding site" evidence="1">
    <location>
        <position position="25"/>
    </location>
    <ligand>
        <name>a divalent metal cation</name>
        <dbReference type="ChEBI" id="CHEBI:60240"/>
        <label>3</label>
        <note>in cluster B</note>
    </ligand>
</feature>
<feature type="binding site" evidence="1">
    <location>
        <position position="27"/>
    </location>
    <ligand>
        <name>a divalent metal cation</name>
        <dbReference type="ChEBI" id="CHEBI:60240"/>
        <label>3</label>
        <note>in cluster B</note>
    </ligand>
</feature>
<feature type="binding site" evidence="1">
    <location>
        <position position="30"/>
    </location>
    <ligand>
        <name>a divalent metal cation</name>
        <dbReference type="ChEBI" id="CHEBI:60240"/>
        <label>4</label>
        <note>in cluster A</note>
    </ligand>
</feature>
<feature type="binding site" evidence="1">
    <location>
        <position position="33"/>
    </location>
    <ligand>
        <name>a divalent metal cation</name>
        <dbReference type="ChEBI" id="CHEBI:60240"/>
        <label>4</label>
        <note>in cluster A</note>
    </ligand>
</feature>
<feature type="binding site" evidence="1">
    <location>
        <position position="33"/>
    </location>
    <ligand>
        <name>a divalent metal cation</name>
        <dbReference type="ChEBI" id="CHEBI:60240"/>
        <label>5</label>
        <note>in cluster A</note>
    </ligand>
</feature>
<feature type="binding site" evidence="1">
    <location>
        <position position="37"/>
    </location>
    <ligand>
        <name>a divalent metal cation</name>
        <dbReference type="ChEBI" id="CHEBI:60240"/>
        <label>5</label>
        <note>in cluster A</note>
    </ligand>
</feature>
<feature type="binding site" evidence="1">
    <location>
        <position position="39"/>
    </location>
    <ligand>
        <name>a divalent metal cation</name>
        <dbReference type="ChEBI" id="CHEBI:60240"/>
        <label>6</label>
        <note>in cluster A</note>
    </ligand>
</feature>
<feature type="binding site" evidence="1">
    <location>
        <position position="45"/>
    </location>
    <ligand>
        <name>a divalent metal cation</name>
        <dbReference type="ChEBI" id="CHEBI:60240"/>
        <label>6</label>
        <note>in cluster A</note>
    </ligand>
</feature>
<feature type="binding site" evidence="1">
    <location>
        <position position="49"/>
    </location>
    <ligand>
        <name>a divalent metal cation</name>
        <dbReference type="ChEBI" id="CHEBI:60240"/>
        <label>4</label>
        <note>in cluster A</note>
    </ligand>
</feature>
<feature type="binding site" evidence="1">
    <location>
        <position position="49"/>
    </location>
    <ligand>
        <name>a divalent metal cation</name>
        <dbReference type="ChEBI" id="CHEBI:60240"/>
        <label>6</label>
        <note>in cluster A</note>
    </ligand>
</feature>
<feature type="binding site" evidence="1">
    <location>
        <position position="53"/>
    </location>
    <ligand>
        <name>a divalent metal cation</name>
        <dbReference type="ChEBI" id="CHEBI:60240"/>
        <label>4</label>
        <note>in cluster A</note>
    </ligand>
</feature>
<feature type="binding site" evidence="1">
    <location>
        <position position="55"/>
    </location>
    <ligand>
        <name>a divalent metal cation</name>
        <dbReference type="ChEBI" id="CHEBI:60240"/>
        <label>5</label>
        <note>in cluster A</note>
    </ligand>
</feature>
<feature type="binding site" evidence="1">
    <location>
        <position position="56"/>
    </location>
    <ligand>
        <name>a divalent metal cation</name>
        <dbReference type="ChEBI" id="CHEBI:60240"/>
        <label>5</label>
        <note>in cluster A</note>
    </ligand>
</feature>
<feature type="binding site" evidence="1">
    <location>
        <position position="56"/>
    </location>
    <ligand>
        <name>a divalent metal cation</name>
        <dbReference type="ChEBI" id="CHEBI:60240"/>
        <label>6</label>
        <note>in cluster A</note>
    </ligand>
</feature>
<comment type="function">
    <text>Metallothioneins have a high content of cysteine residues that bind various heavy metals. Class I MTS in marine crustacea are involved in the sequestration of elevated levels of heavy-metal ions.</text>
</comment>
<comment type="similarity">
    <text evidence="2">Belongs to the metallothionein superfamily. Type 3 family.</text>
</comment>
<organism>
    <name type="scientific">Scylla serrata</name>
    <name type="common">Mud crab</name>
    <dbReference type="NCBI Taxonomy" id="6761"/>
    <lineage>
        <taxon>Eukaryota</taxon>
        <taxon>Metazoa</taxon>
        <taxon>Ecdysozoa</taxon>
        <taxon>Arthropoda</taxon>
        <taxon>Crustacea</taxon>
        <taxon>Multicrustacea</taxon>
        <taxon>Malacostraca</taxon>
        <taxon>Eumalacostraca</taxon>
        <taxon>Eucarida</taxon>
        <taxon>Decapoda</taxon>
        <taxon>Pleocyemata</taxon>
        <taxon>Brachyura</taxon>
        <taxon>Eubrachyura</taxon>
        <taxon>Portunoidea</taxon>
        <taxon>Portunidae</taxon>
        <taxon>Portuninae</taxon>
        <taxon>Scylla</taxon>
    </lineage>
</organism>
<dbReference type="PIR" id="A03284">
    <property type="entry name" value="SMKD2S"/>
</dbReference>
<dbReference type="SMR" id="P02806"/>
<dbReference type="GO" id="GO:0046872">
    <property type="term" value="F:metal ion binding"/>
    <property type="evidence" value="ECO:0007669"/>
    <property type="project" value="UniProtKB-KW"/>
</dbReference>
<dbReference type="InterPro" id="IPR002045">
    <property type="entry name" value="Metalthion_crustacean"/>
</dbReference>
<dbReference type="InterPro" id="IPR017854">
    <property type="entry name" value="Metalthion_dom_sf"/>
</dbReference>
<dbReference type="PRINTS" id="PR00858">
    <property type="entry name" value="MTCRUSTACEAN"/>
</dbReference>
<dbReference type="SUPFAM" id="SSF57868">
    <property type="entry name" value="Metallothionein"/>
    <property type="match status" value="2"/>
</dbReference>
<evidence type="ECO:0000250" key="1">
    <source>
        <dbReference type="UniProtKB" id="P29499"/>
    </source>
</evidence>
<evidence type="ECO:0000305" key="2"/>
<keyword id="KW-0903">Direct protein sequencing</keyword>
<keyword id="KW-0479">Metal-binding</keyword>
<keyword id="KW-0480">Metal-thiolate cluster</keyword>
<accession>P02806</accession>
<sequence length="57" mass="6109">PDPCCNDKCDCKEGECKTGCKCTSCRCPPCEQCSSGCKCANKEDCRKTCSKPCSCCP</sequence>